<sequence length="305" mass="33587">MTESDMSEQLRGDVDHPESGIDVVLVTGLSGAGRGTAAKVLEDLGWYVADNLPPELIARMVELGLAAGSRITQLAVVMDVRSRGFTGDLDWVRRDLATRNITPRVLFLEASDDILVRRYEQNRRSHPLQGDQTLAEGIARERALLAPVRASADLVIDTSKLSVHALRESVERAFGGEVVAETSATVESFGYKYGLPMDADIVMDVRFLPNPHWVDALRPHTGQHPDVRDYVLGQPGAEEFLDTYHRLLNVVIDGYRREGKRYMTVAIGCTGGKHRSVAIAEALAGRLQGGDELTVRVLHRDLGRE</sequence>
<gene>
    <name type="ordered locus">Mmcs_2396</name>
</gene>
<reference key="1">
    <citation type="submission" date="2006-06" db="EMBL/GenBank/DDBJ databases">
        <title>Complete sequence of chromosome of Mycobacterium sp. MCS.</title>
        <authorList>
            <consortium name="US DOE Joint Genome Institute"/>
            <person name="Copeland A."/>
            <person name="Lucas S."/>
            <person name="Lapidus A."/>
            <person name="Barry K."/>
            <person name="Detter J.C."/>
            <person name="Glavina del Rio T."/>
            <person name="Hammon N."/>
            <person name="Israni S."/>
            <person name="Dalin E."/>
            <person name="Tice H."/>
            <person name="Pitluck S."/>
            <person name="Martinez M."/>
            <person name="Schmutz J."/>
            <person name="Larimer F."/>
            <person name="Land M."/>
            <person name="Hauser L."/>
            <person name="Kyrpides N."/>
            <person name="Kim E."/>
            <person name="Miller C.D."/>
            <person name="Hughes J.E."/>
            <person name="Anderson A.J."/>
            <person name="Sims R.C."/>
            <person name="Richardson P."/>
        </authorList>
    </citation>
    <scope>NUCLEOTIDE SEQUENCE [LARGE SCALE GENOMIC DNA]</scope>
    <source>
        <strain>MCS</strain>
    </source>
</reference>
<comment type="function">
    <text evidence="1">Displays ATPase and GTPase activities.</text>
</comment>
<comment type="similarity">
    <text evidence="1">Belongs to the RapZ-like family.</text>
</comment>
<organism>
    <name type="scientific">Mycobacterium sp. (strain MCS)</name>
    <dbReference type="NCBI Taxonomy" id="164756"/>
    <lineage>
        <taxon>Bacteria</taxon>
        <taxon>Bacillati</taxon>
        <taxon>Actinomycetota</taxon>
        <taxon>Actinomycetes</taxon>
        <taxon>Mycobacteriales</taxon>
        <taxon>Mycobacteriaceae</taxon>
        <taxon>Mycobacterium</taxon>
    </lineage>
</organism>
<dbReference type="EMBL" id="CP000384">
    <property type="protein sequence ID" value="ABG08504.1"/>
    <property type="molecule type" value="Genomic_DNA"/>
</dbReference>
<dbReference type="SMR" id="Q1B9D0"/>
<dbReference type="KEGG" id="mmc:Mmcs_2396"/>
<dbReference type="HOGENOM" id="CLU_059558_0_0_11"/>
<dbReference type="BioCyc" id="MSP164756:G1G6O-2448-MONOMER"/>
<dbReference type="GO" id="GO:0005524">
    <property type="term" value="F:ATP binding"/>
    <property type="evidence" value="ECO:0007669"/>
    <property type="project" value="UniProtKB-UniRule"/>
</dbReference>
<dbReference type="GO" id="GO:0005525">
    <property type="term" value="F:GTP binding"/>
    <property type="evidence" value="ECO:0007669"/>
    <property type="project" value="UniProtKB-UniRule"/>
</dbReference>
<dbReference type="Gene3D" id="3.40.50.300">
    <property type="entry name" value="P-loop containing nucleotide triphosphate hydrolases"/>
    <property type="match status" value="1"/>
</dbReference>
<dbReference type="HAMAP" id="MF_00636">
    <property type="entry name" value="RapZ_like"/>
    <property type="match status" value="1"/>
</dbReference>
<dbReference type="InterPro" id="IPR027417">
    <property type="entry name" value="P-loop_NTPase"/>
</dbReference>
<dbReference type="InterPro" id="IPR005337">
    <property type="entry name" value="RapZ-like"/>
</dbReference>
<dbReference type="InterPro" id="IPR053930">
    <property type="entry name" value="RapZ-like_N"/>
</dbReference>
<dbReference type="InterPro" id="IPR053931">
    <property type="entry name" value="RapZ_C"/>
</dbReference>
<dbReference type="NCBIfam" id="NF003828">
    <property type="entry name" value="PRK05416.1"/>
    <property type="match status" value="1"/>
</dbReference>
<dbReference type="PANTHER" id="PTHR30448">
    <property type="entry name" value="RNASE ADAPTER PROTEIN RAPZ"/>
    <property type="match status" value="1"/>
</dbReference>
<dbReference type="PANTHER" id="PTHR30448:SF0">
    <property type="entry name" value="RNASE ADAPTER PROTEIN RAPZ"/>
    <property type="match status" value="1"/>
</dbReference>
<dbReference type="Pfam" id="PF22740">
    <property type="entry name" value="PapZ_C"/>
    <property type="match status" value="1"/>
</dbReference>
<dbReference type="Pfam" id="PF03668">
    <property type="entry name" value="RapZ-like_N"/>
    <property type="match status" value="1"/>
</dbReference>
<dbReference type="PIRSF" id="PIRSF005052">
    <property type="entry name" value="P-loopkin"/>
    <property type="match status" value="1"/>
</dbReference>
<dbReference type="SUPFAM" id="SSF52540">
    <property type="entry name" value="P-loop containing nucleoside triphosphate hydrolases"/>
    <property type="match status" value="1"/>
</dbReference>
<protein>
    <recommendedName>
        <fullName evidence="1">Nucleotide-binding protein Mmcs_2396</fullName>
    </recommendedName>
</protein>
<feature type="chain" id="PRO_0000383270" description="Nucleotide-binding protein Mmcs_2396">
    <location>
        <begin position="1"/>
        <end position="305"/>
    </location>
</feature>
<feature type="binding site" evidence="1">
    <location>
        <begin position="28"/>
        <end position="35"/>
    </location>
    <ligand>
        <name>ATP</name>
        <dbReference type="ChEBI" id="CHEBI:30616"/>
    </ligand>
</feature>
<feature type="binding site" evidence="1">
    <location>
        <begin position="79"/>
        <end position="82"/>
    </location>
    <ligand>
        <name>GTP</name>
        <dbReference type="ChEBI" id="CHEBI:37565"/>
    </ligand>
</feature>
<proteinExistence type="inferred from homology"/>
<name>Y2396_MYCSS</name>
<keyword id="KW-0067">ATP-binding</keyword>
<keyword id="KW-0342">GTP-binding</keyword>
<keyword id="KW-0547">Nucleotide-binding</keyword>
<evidence type="ECO:0000255" key="1">
    <source>
        <dbReference type="HAMAP-Rule" id="MF_00636"/>
    </source>
</evidence>
<accession>Q1B9D0</accession>